<sequence length="309" mass="33345">MVRVYAPASSANMSVGFDVLGAAVTPIDGSLLGDVVGVEAADSFSLQNLGRFASKLPSKPRENIVYQCWERFCQELGKQIPVAMTLEKNMPIGSGLGSSACSVVAALVAMNEYCGKPLNDTRLLAIMGELEGRISGSIHYDNVAPCFLGGMQLMIEENGIISQQVPGFDEWLWVLAYPGIKVSTAEARAILPAQYRRQDCIAHGRHLAGFIHACYSRQPLLAAKLMKDVIAEPYRERLLPGFSQARQAVAEIGAVASGISGSGPTLFALCDKPDTAQRVAEWLAKNYLQNQEGFVHICRLDTAGARVLE</sequence>
<keyword id="KW-0028">Amino-acid biosynthesis</keyword>
<keyword id="KW-0067">ATP-binding</keyword>
<keyword id="KW-0963">Cytoplasm</keyword>
<keyword id="KW-0418">Kinase</keyword>
<keyword id="KW-0547">Nucleotide-binding</keyword>
<keyword id="KW-0791">Threonine biosynthesis</keyword>
<keyword id="KW-0808">Transferase</keyword>
<reference key="1">
    <citation type="journal article" date="2009" name="PLoS Genet.">
        <title>Organised genome dynamics in the Escherichia coli species results in highly diverse adaptive paths.</title>
        <authorList>
            <person name="Touchon M."/>
            <person name="Hoede C."/>
            <person name="Tenaillon O."/>
            <person name="Barbe V."/>
            <person name="Baeriswyl S."/>
            <person name="Bidet P."/>
            <person name="Bingen E."/>
            <person name="Bonacorsi S."/>
            <person name="Bouchier C."/>
            <person name="Bouvet O."/>
            <person name="Calteau A."/>
            <person name="Chiapello H."/>
            <person name="Clermont O."/>
            <person name="Cruveiller S."/>
            <person name="Danchin A."/>
            <person name="Diard M."/>
            <person name="Dossat C."/>
            <person name="Karoui M.E."/>
            <person name="Frapy E."/>
            <person name="Garry L."/>
            <person name="Ghigo J.M."/>
            <person name="Gilles A.M."/>
            <person name="Johnson J."/>
            <person name="Le Bouguenec C."/>
            <person name="Lescat M."/>
            <person name="Mangenot S."/>
            <person name="Martinez-Jehanne V."/>
            <person name="Matic I."/>
            <person name="Nassif X."/>
            <person name="Oztas S."/>
            <person name="Petit M.A."/>
            <person name="Pichon C."/>
            <person name="Rouy Z."/>
            <person name="Ruf C.S."/>
            <person name="Schneider D."/>
            <person name="Tourret J."/>
            <person name="Vacherie B."/>
            <person name="Vallenet D."/>
            <person name="Medigue C."/>
            <person name="Rocha E.P.C."/>
            <person name="Denamur E."/>
        </authorList>
    </citation>
    <scope>NUCLEOTIDE SEQUENCE [LARGE SCALE GENOMIC DNA]</scope>
    <source>
        <strain>ATCC 35469 / DSM 13698 / BCRC 15582 / CCUG 18766 / IAM 14443 / JCM 21226 / LMG 7866 / NBRC 102419 / NCTC 12128 / CDC 0568-73</strain>
    </source>
</reference>
<gene>
    <name evidence="1" type="primary">thrB</name>
    <name type="ordered locus">EFER_0002</name>
</gene>
<organism>
    <name type="scientific">Escherichia fergusonii (strain ATCC 35469 / DSM 13698 / CCUG 18766 / IAM 14443 / JCM 21226 / LMG 7866 / NBRC 102419 / NCTC 12128 / CDC 0568-73)</name>
    <dbReference type="NCBI Taxonomy" id="585054"/>
    <lineage>
        <taxon>Bacteria</taxon>
        <taxon>Pseudomonadati</taxon>
        <taxon>Pseudomonadota</taxon>
        <taxon>Gammaproteobacteria</taxon>
        <taxon>Enterobacterales</taxon>
        <taxon>Enterobacteriaceae</taxon>
        <taxon>Escherichia</taxon>
    </lineage>
</organism>
<proteinExistence type="inferred from homology"/>
<feature type="chain" id="PRO_1000122425" description="Homoserine kinase">
    <location>
        <begin position="1"/>
        <end position="309"/>
    </location>
</feature>
<feature type="binding site" evidence="1">
    <location>
        <begin position="91"/>
        <end position="101"/>
    </location>
    <ligand>
        <name>ATP</name>
        <dbReference type="ChEBI" id="CHEBI:30616"/>
    </ligand>
</feature>
<evidence type="ECO:0000255" key="1">
    <source>
        <dbReference type="HAMAP-Rule" id="MF_00384"/>
    </source>
</evidence>
<comment type="function">
    <text evidence="1">Catalyzes the ATP-dependent phosphorylation of L-homoserine to L-homoserine phosphate.</text>
</comment>
<comment type="catalytic activity">
    <reaction evidence="1">
        <text>L-homoserine + ATP = O-phospho-L-homoserine + ADP + H(+)</text>
        <dbReference type="Rhea" id="RHEA:13985"/>
        <dbReference type="ChEBI" id="CHEBI:15378"/>
        <dbReference type="ChEBI" id="CHEBI:30616"/>
        <dbReference type="ChEBI" id="CHEBI:57476"/>
        <dbReference type="ChEBI" id="CHEBI:57590"/>
        <dbReference type="ChEBI" id="CHEBI:456216"/>
        <dbReference type="EC" id="2.7.1.39"/>
    </reaction>
</comment>
<comment type="pathway">
    <text evidence="1">Amino-acid biosynthesis; L-threonine biosynthesis; L-threonine from L-aspartate: step 4/5.</text>
</comment>
<comment type="subcellular location">
    <subcellularLocation>
        <location evidence="1">Cytoplasm</location>
    </subcellularLocation>
</comment>
<comment type="similarity">
    <text evidence="1">Belongs to the GHMP kinase family. Homoserine kinase subfamily.</text>
</comment>
<dbReference type="EC" id="2.7.1.39" evidence="1"/>
<dbReference type="EMBL" id="CU928158">
    <property type="protein sequence ID" value="CAQ87590.1"/>
    <property type="molecule type" value="Genomic_DNA"/>
</dbReference>
<dbReference type="RefSeq" id="WP_000252740.1">
    <property type="nucleotide sequence ID" value="NC_011740.1"/>
</dbReference>
<dbReference type="SMR" id="B7LWR1"/>
<dbReference type="GeneID" id="75058908"/>
<dbReference type="KEGG" id="efe:EFER_0002"/>
<dbReference type="HOGENOM" id="CLU_041243_1_1_6"/>
<dbReference type="OrthoDB" id="9769912at2"/>
<dbReference type="UniPathway" id="UPA00050">
    <property type="reaction ID" value="UER00064"/>
</dbReference>
<dbReference type="Proteomes" id="UP000000745">
    <property type="component" value="Chromosome"/>
</dbReference>
<dbReference type="GO" id="GO:0005737">
    <property type="term" value="C:cytoplasm"/>
    <property type="evidence" value="ECO:0007669"/>
    <property type="project" value="UniProtKB-SubCell"/>
</dbReference>
<dbReference type="GO" id="GO:0005524">
    <property type="term" value="F:ATP binding"/>
    <property type="evidence" value="ECO:0007669"/>
    <property type="project" value="UniProtKB-UniRule"/>
</dbReference>
<dbReference type="GO" id="GO:0004413">
    <property type="term" value="F:homoserine kinase activity"/>
    <property type="evidence" value="ECO:0007669"/>
    <property type="project" value="UniProtKB-UniRule"/>
</dbReference>
<dbReference type="GO" id="GO:0009088">
    <property type="term" value="P:threonine biosynthetic process"/>
    <property type="evidence" value="ECO:0007669"/>
    <property type="project" value="UniProtKB-UniRule"/>
</dbReference>
<dbReference type="FunFam" id="3.30.230.10:FF:000020">
    <property type="entry name" value="Homoserine kinase"/>
    <property type="match status" value="1"/>
</dbReference>
<dbReference type="FunFam" id="3.30.70.890:FF:000002">
    <property type="entry name" value="Homoserine kinase"/>
    <property type="match status" value="1"/>
</dbReference>
<dbReference type="Gene3D" id="3.30.230.10">
    <property type="match status" value="1"/>
</dbReference>
<dbReference type="Gene3D" id="3.30.70.890">
    <property type="entry name" value="GHMP kinase, C-terminal domain"/>
    <property type="match status" value="1"/>
</dbReference>
<dbReference type="HAMAP" id="MF_00384">
    <property type="entry name" value="Homoser_kinase"/>
    <property type="match status" value="1"/>
</dbReference>
<dbReference type="InterPro" id="IPR013750">
    <property type="entry name" value="GHMP_kinase_C_dom"/>
</dbReference>
<dbReference type="InterPro" id="IPR036554">
    <property type="entry name" value="GHMP_kinase_C_sf"/>
</dbReference>
<dbReference type="InterPro" id="IPR006204">
    <property type="entry name" value="GHMP_kinase_N_dom"/>
</dbReference>
<dbReference type="InterPro" id="IPR006203">
    <property type="entry name" value="GHMP_knse_ATP-bd_CS"/>
</dbReference>
<dbReference type="InterPro" id="IPR000870">
    <property type="entry name" value="Homoserine_kinase"/>
</dbReference>
<dbReference type="InterPro" id="IPR020568">
    <property type="entry name" value="Ribosomal_Su5_D2-typ_SF"/>
</dbReference>
<dbReference type="InterPro" id="IPR014721">
    <property type="entry name" value="Ribsml_uS5_D2-typ_fold_subgr"/>
</dbReference>
<dbReference type="NCBIfam" id="NF002288">
    <property type="entry name" value="PRK01212.1-4"/>
    <property type="match status" value="1"/>
</dbReference>
<dbReference type="NCBIfam" id="TIGR00191">
    <property type="entry name" value="thrB"/>
    <property type="match status" value="1"/>
</dbReference>
<dbReference type="PANTHER" id="PTHR20861:SF1">
    <property type="entry name" value="HOMOSERINE KINASE"/>
    <property type="match status" value="1"/>
</dbReference>
<dbReference type="PANTHER" id="PTHR20861">
    <property type="entry name" value="HOMOSERINE/4-DIPHOSPHOCYTIDYL-2-C-METHYL-D-ERYTHRITOL KINASE"/>
    <property type="match status" value="1"/>
</dbReference>
<dbReference type="Pfam" id="PF08544">
    <property type="entry name" value="GHMP_kinases_C"/>
    <property type="match status" value="1"/>
</dbReference>
<dbReference type="Pfam" id="PF00288">
    <property type="entry name" value="GHMP_kinases_N"/>
    <property type="match status" value="1"/>
</dbReference>
<dbReference type="PIRSF" id="PIRSF000676">
    <property type="entry name" value="Homoser_kin"/>
    <property type="match status" value="1"/>
</dbReference>
<dbReference type="PRINTS" id="PR00958">
    <property type="entry name" value="HOMSERKINASE"/>
</dbReference>
<dbReference type="SUPFAM" id="SSF55060">
    <property type="entry name" value="GHMP Kinase, C-terminal domain"/>
    <property type="match status" value="1"/>
</dbReference>
<dbReference type="SUPFAM" id="SSF54211">
    <property type="entry name" value="Ribosomal protein S5 domain 2-like"/>
    <property type="match status" value="1"/>
</dbReference>
<dbReference type="PROSITE" id="PS00627">
    <property type="entry name" value="GHMP_KINASES_ATP"/>
    <property type="match status" value="1"/>
</dbReference>
<name>KHSE_ESCF3</name>
<accession>B7LWR1</accession>
<protein>
    <recommendedName>
        <fullName evidence="1">Homoserine kinase</fullName>
        <shortName evidence="1">HK</shortName>
        <shortName evidence="1">HSK</shortName>
        <ecNumber evidence="1">2.7.1.39</ecNumber>
    </recommendedName>
</protein>